<protein>
    <recommendedName>
        <fullName evidence="1">Chaperonin GroEL</fullName>
        <ecNumber evidence="1">5.6.1.7</ecNumber>
    </recommendedName>
    <alternativeName>
        <fullName evidence="1">60 kDa chaperonin</fullName>
    </alternativeName>
    <alternativeName>
        <fullName evidence="1">Chaperonin-60</fullName>
        <shortName evidence="1">Cpn60</shortName>
    </alternativeName>
</protein>
<organism>
    <name type="scientific">Leptospira biflexa serovar Patoc (strain Patoc 1 / Ames)</name>
    <dbReference type="NCBI Taxonomy" id="355278"/>
    <lineage>
        <taxon>Bacteria</taxon>
        <taxon>Pseudomonadati</taxon>
        <taxon>Spirochaetota</taxon>
        <taxon>Spirochaetia</taxon>
        <taxon>Leptospirales</taxon>
        <taxon>Leptospiraceae</taxon>
        <taxon>Leptospira</taxon>
    </lineage>
</organism>
<keyword id="KW-0067">ATP-binding</keyword>
<keyword id="KW-0143">Chaperone</keyword>
<keyword id="KW-0963">Cytoplasm</keyword>
<keyword id="KW-0413">Isomerase</keyword>
<keyword id="KW-0547">Nucleotide-binding</keyword>
<comment type="function">
    <text evidence="1">Together with its co-chaperonin GroES, plays an essential role in assisting protein folding. The GroEL-GroES system forms a nano-cage that allows encapsulation of the non-native substrate proteins and provides a physical environment optimized to promote and accelerate protein folding.</text>
</comment>
<comment type="catalytic activity">
    <reaction evidence="1">
        <text>ATP + H2O + a folded polypeptide = ADP + phosphate + an unfolded polypeptide.</text>
        <dbReference type="EC" id="5.6.1.7"/>
    </reaction>
</comment>
<comment type="subunit">
    <text evidence="1">Forms a cylinder of 14 subunits composed of two heptameric rings stacked back-to-back. Interacts with the co-chaperonin GroES.</text>
</comment>
<comment type="subcellular location">
    <subcellularLocation>
        <location evidence="1">Cytoplasm</location>
    </subcellularLocation>
</comment>
<comment type="similarity">
    <text evidence="1">Belongs to the chaperonin (HSP60) family.</text>
</comment>
<reference key="1">
    <citation type="journal article" date="2008" name="PLoS ONE">
        <title>Genome sequence of the saprophyte Leptospira biflexa provides insights into the evolution of Leptospira and the pathogenesis of leptospirosis.</title>
        <authorList>
            <person name="Picardeau M."/>
            <person name="Bulach D.M."/>
            <person name="Bouchier C."/>
            <person name="Zuerner R.L."/>
            <person name="Zidane N."/>
            <person name="Wilson P.J."/>
            <person name="Creno S."/>
            <person name="Kuczek E.S."/>
            <person name="Bommezzadri S."/>
            <person name="Davis J.C."/>
            <person name="McGrath A."/>
            <person name="Johnson M.J."/>
            <person name="Boursaux-Eude C."/>
            <person name="Seemann T."/>
            <person name="Rouy Z."/>
            <person name="Coppel R.L."/>
            <person name="Rood J.I."/>
            <person name="Lajus A."/>
            <person name="Davies J.K."/>
            <person name="Medigue C."/>
            <person name="Adler B."/>
        </authorList>
    </citation>
    <scope>NUCLEOTIDE SEQUENCE [LARGE SCALE GENOMIC DNA]</scope>
    <source>
        <strain>Patoc 1 / Ames</strain>
    </source>
</reference>
<proteinExistence type="inferred from homology"/>
<accession>B0SCC0</accession>
<name>CH60_LEPBA</name>
<feature type="chain" id="PRO_1000130032" description="Chaperonin GroEL">
    <location>
        <begin position="1"/>
        <end position="549"/>
    </location>
</feature>
<feature type="binding site" evidence="1">
    <location>
        <begin position="29"/>
        <end position="32"/>
    </location>
    <ligand>
        <name>ATP</name>
        <dbReference type="ChEBI" id="CHEBI:30616"/>
    </ligand>
</feature>
<feature type="binding site" evidence="1">
    <location>
        <position position="50"/>
    </location>
    <ligand>
        <name>ATP</name>
        <dbReference type="ChEBI" id="CHEBI:30616"/>
    </ligand>
</feature>
<feature type="binding site" evidence="1">
    <location>
        <begin position="86"/>
        <end position="90"/>
    </location>
    <ligand>
        <name>ATP</name>
        <dbReference type="ChEBI" id="CHEBI:30616"/>
    </ligand>
</feature>
<feature type="binding site" evidence="1">
    <location>
        <position position="414"/>
    </location>
    <ligand>
        <name>ATP</name>
        <dbReference type="ChEBI" id="CHEBI:30616"/>
    </ligand>
</feature>
<feature type="binding site" evidence="1">
    <location>
        <begin position="477"/>
        <end position="479"/>
    </location>
    <ligand>
        <name>ATP</name>
        <dbReference type="ChEBI" id="CHEBI:30616"/>
    </ligand>
</feature>
<feature type="binding site" evidence="1">
    <location>
        <position position="493"/>
    </location>
    <ligand>
        <name>ATP</name>
        <dbReference type="ChEBI" id="CHEBI:30616"/>
    </ligand>
</feature>
<gene>
    <name evidence="1" type="primary">groEL</name>
    <name evidence="1" type="synonym">groL</name>
    <name type="ordered locus">LBF_2274</name>
</gene>
<dbReference type="EC" id="5.6.1.7" evidence="1"/>
<dbReference type="EMBL" id="CP000777">
    <property type="protein sequence ID" value="ABZ94767.1"/>
    <property type="molecule type" value="Genomic_DNA"/>
</dbReference>
<dbReference type="RefSeq" id="WP_012389299.1">
    <property type="nucleotide sequence ID" value="NC_010842.1"/>
</dbReference>
<dbReference type="SMR" id="B0SCC0"/>
<dbReference type="KEGG" id="lbf:LBF_2274"/>
<dbReference type="HOGENOM" id="CLU_016503_3_0_12"/>
<dbReference type="GO" id="GO:0005737">
    <property type="term" value="C:cytoplasm"/>
    <property type="evidence" value="ECO:0007669"/>
    <property type="project" value="UniProtKB-SubCell"/>
</dbReference>
<dbReference type="GO" id="GO:0005524">
    <property type="term" value="F:ATP binding"/>
    <property type="evidence" value="ECO:0007669"/>
    <property type="project" value="UniProtKB-UniRule"/>
</dbReference>
<dbReference type="GO" id="GO:0140662">
    <property type="term" value="F:ATP-dependent protein folding chaperone"/>
    <property type="evidence" value="ECO:0007669"/>
    <property type="project" value="InterPro"/>
</dbReference>
<dbReference type="GO" id="GO:0016853">
    <property type="term" value="F:isomerase activity"/>
    <property type="evidence" value="ECO:0007669"/>
    <property type="project" value="UniProtKB-KW"/>
</dbReference>
<dbReference type="GO" id="GO:0051082">
    <property type="term" value="F:unfolded protein binding"/>
    <property type="evidence" value="ECO:0007669"/>
    <property type="project" value="UniProtKB-UniRule"/>
</dbReference>
<dbReference type="GO" id="GO:0042026">
    <property type="term" value="P:protein refolding"/>
    <property type="evidence" value="ECO:0007669"/>
    <property type="project" value="UniProtKB-UniRule"/>
</dbReference>
<dbReference type="CDD" id="cd03344">
    <property type="entry name" value="GroEL"/>
    <property type="match status" value="1"/>
</dbReference>
<dbReference type="FunFam" id="3.50.7.10:FF:000001">
    <property type="entry name" value="60 kDa chaperonin"/>
    <property type="match status" value="1"/>
</dbReference>
<dbReference type="Gene3D" id="3.50.7.10">
    <property type="entry name" value="GroEL"/>
    <property type="match status" value="1"/>
</dbReference>
<dbReference type="Gene3D" id="1.10.560.10">
    <property type="entry name" value="GroEL-like equatorial domain"/>
    <property type="match status" value="1"/>
</dbReference>
<dbReference type="Gene3D" id="3.30.260.10">
    <property type="entry name" value="TCP-1-like chaperonin intermediate domain"/>
    <property type="match status" value="1"/>
</dbReference>
<dbReference type="HAMAP" id="MF_00600">
    <property type="entry name" value="CH60"/>
    <property type="match status" value="1"/>
</dbReference>
<dbReference type="InterPro" id="IPR018370">
    <property type="entry name" value="Chaperonin_Cpn60_CS"/>
</dbReference>
<dbReference type="InterPro" id="IPR001844">
    <property type="entry name" value="Cpn60/GroEL"/>
</dbReference>
<dbReference type="InterPro" id="IPR002423">
    <property type="entry name" value="Cpn60/GroEL/TCP-1"/>
</dbReference>
<dbReference type="InterPro" id="IPR027409">
    <property type="entry name" value="GroEL-like_apical_dom_sf"/>
</dbReference>
<dbReference type="InterPro" id="IPR027413">
    <property type="entry name" value="GROEL-like_equatorial_sf"/>
</dbReference>
<dbReference type="InterPro" id="IPR027410">
    <property type="entry name" value="TCP-1-like_intermed_sf"/>
</dbReference>
<dbReference type="NCBIfam" id="TIGR02348">
    <property type="entry name" value="GroEL"/>
    <property type="match status" value="1"/>
</dbReference>
<dbReference type="NCBIfam" id="NF000592">
    <property type="entry name" value="PRK00013.1"/>
    <property type="match status" value="1"/>
</dbReference>
<dbReference type="NCBIfam" id="NF009487">
    <property type="entry name" value="PRK12849.1"/>
    <property type="match status" value="1"/>
</dbReference>
<dbReference type="NCBIfam" id="NF009488">
    <property type="entry name" value="PRK12850.1"/>
    <property type="match status" value="1"/>
</dbReference>
<dbReference type="NCBIfam" id="NF009489">
    <property type="entry name" value="PRK12851.1"/>
    <property type="match status" value="1"/>
</dbReference>
<dbReference type="PANTHER" id="PTHR45633">
    <property type="entry name" value="60 KDA HEAT SHOCK PROTEIN, MITOCHONDRIAL"/>
    <property type="match status" value="1"/>
</dbReference>
<dbReference type="Pfam" id="PF00118">
    <property type="entry name" value="Cpn60_TCP1"/>
    <property type="match status" value="1"/>
</dbReference>
<dbReference type="PRINTS" id="PR00298">
    <property type="entry name" value="CHAPERONIN60"/>
</dbReference>
<dbReference type="SUPFAM" id="SSF52029">
    <property type="entry name" value="GroEL apical domain-like"/>
    <property type="match status" value="1"/>
</dbReference>
<dbReference type="SUPFAM" id="SSF48592">
    <property type="entry name" value="GroEL equatorial domain-like"/>
    <property type="match status" value="1"/>
</dbReference>
<dbReference type="SUPFAM" id="SSF54849">
    <property type="entry name" value="GroEL-intermediate domain like"/>
    <property type="match status" value="1"/>
</dbReference>
<dbReference type="PROSITE" id="PS00296">
    <property type="entry name" value="CHAPERONINS_CPN60"/>
    <property type="match status" value="1"/>
</dbReference>
<evidence type="ECO:0000255" key="1">
    <source>
        <dbReference type="HAMAP-Rule" id="MF_00600"/>
    </source>
</evidence>
<sequence length="549" mass="58109">MAKTIEFDETARRKLLSGVNKLANAVKVTLGPKGRNVVIDKKFGSPTITKDGVTVAKEIELEDAIENMGAQMVKEVSTKTNDIAGDGTTTATILAQAIINEGLKNVTAGANPMALKHGIDKAVVVAVEEIKKHAIKINSKAEYANVATISANNDPEIGNLIAQAFDKVGKEGVITVDEAKSIETTLDIVEGMQFDRGYVSPYMVTDPEAMIATFNDPFILIYDKKIASMKDLLPVLEKIAQAGRPLVIIAEEVEGEALATIVVNTLRKTIQCVAVKAPGFGDRRKAMLEDIAILTGGQVISEDLGMKLENADVKMLGRAKKVVVDKENTTIIEGAGASKDIQGRVNQIKKQIEDTTSDYDREKLQERLAKLAGGVAVIHVGAATEVEMKEKKARVEDALSATRAAVEEGIVPGGGLTLLRAQDAVKALKLVGDEQTGANIILRALEEPIRMITSNAGLEGSVIVEQARARKGNEGFNALTMVWEDLIKAGVVDPAKVVRSALQNAASIGAMILTTEVTITDKPEPKDASGAGMGGMGGMGGMGGMGGMM</sequence>